<name>TGT_DEHM1</name>
<evidence type="ECO:0000255" key="1">
    <source>
        <dbReference type="HAMAP-Rule" id="MF_00168"/>
    </source>
</evidence>
<dbReference type="EC" id="2.4.2.29" evidence="1"/>
<dbReference type="EMBL" id="CP000027">
    <property type="protein sequence ID" value="AAW39086.1"/>
    <property type="molecule type" value="Genomic_DNA"/>
</dbReference>
<dbReference type="RefSeq" id="WP_010935862.1">
    <property type="nucleotide sequence ID" value="NC_002936.3"/>
</dbReference>
<dbReference type="SMR" id="Q3ZAE2"/>
<dbReference type="FunCoup" id="Q3ZAE2">
    <property type="interactions" value="322"/>
</dbReference>
<dbReference type="STRING" id="243164.DET0052"/>
<dbReference type="GeneID" id="3229043"/>
<dbReference type="KEGG" id="det:DET0052"/>
<dbReference type="PATRIC" id="fig|243164.10.peg.51"/>
<dbReference type="eggNOG" id="COG0343">
    <property type="taxonomic scope" value="Bacteria"/>
</dbReference>
<dbReference type="HOGENOM" id="CLU_022060_0_1_0"/>
<dbReference type="InParanoid" id="Q3ZAE2"/>
<dbReference type="UniPathway" id="UPA00392"/>
<dbReference type="Proteomes" id="UP000008289">
    <property type="component" value="Chromosome"/>
</dbReference>
<dbReference type="GO" id="GO:0005829">
    <property type="term" value="C:cytosol"/>
    <property type="evidence" value="ECO:0007669"/>
    <property type="project" value="TreeGrafter"/>
</dbReference>
<dbReference type="GO" id="GO:0046872">
    <property type="term" value="F:metal ion binding"/>
    <property type="evidence" value="ECO:0007669"/>
    <property type="project" value="UniProtKB-KW"/>
</dbReference>
<dbReference type="GO" id="GO:0008479">
    <property type="term" value="F:tRNA-guanosine(34) queuine transglycosylase activity"/>
    <property type="evidence" value="ECO:0007669"/>
    <property type="project" value="UniProtKB-UniRule"/>
</dbReference>
<dbReference type="GO" id="GO:0008616">
    <property type="term" value="P:queuosine biosynthetic process"/>
    <property type="evidence" value="ECO:0007669"/>
    <property type="project" value="UniProtKB-UniRule"/>
</dbReference>
<dbReference type="GO" id="GO:0002099">
    <property type="term" value="P:tRNA wobble guanine modification"/>
    <property type="evidence" value="ECO:0007669"/>
    <property type="project" value="TreeGrafter"/>
</dbReference>
<dbReference type="GO" id="GO:0101030">
    <property type="term" value="P:tRNA-guanine transglycosylation"/>
    <property type="evidence" value="ECO:0007669"/>
    <property type="project" value="InterPro"/>
</dbReference>
<dbReference type="FunFam" id="3.20.20.105:FF:000001">
    <property type="entry name" value="Queuine tRNA-ribosyltransferase"/>
    <property type="match status" value="1"/>
</dbReference>
<dbReference type="Gene3D" id="3.20.20.105">
    <property type="entry name" value="Queuine tRNA-ribosyltransferase-like"/>
    <property type="match status" value="1"/>
</dbReference>
<dbReference type="HAMAP" id="MF_00168">
    <property type="entry name" value="Q_tRNA_Tgt"/>
    <property type="match status" value="1"/>
</dbReference>
<dbReference type="InterPro" id="IPR050076">
    <property type="entry name" value="ArchSynthase1/Queuine_TRR"/>
</dbReference>
<dbReference type="InterPro" id="IPR004803">
    <property type="entry name" value="TGT"/>
</dbReference>
<dbReference type="InterPro" id="IPR036511">
    <property type="entry name" value="TGT-like_sf"/>
</dbReference>
<dbReference type="InterPro" id="IPR002616">
    <property type="entry name" value="tRNA_ribo_trans-like"/>
</dbReference>
<dbReference type="NCBIfam" id="TIGR00430">
    <property type="entry name" value="Q_tRNA_tgt"/>
    <property type="match status" value="1"/>
</dbReference>
<dbReference type="NCBIfam" id="TIGR00449">
    <property type="entry name" value="tgt_general"/>
    <property type="match status" value="1"/>
</dbReference>
<dbReference type="PANTHER" id="PTHR46499">
    <property type="entry name" value="QUEUINE TRNA-RIBOSYLTRANSFERASE"/>
    <property type="match status" value="1"/>
</dbReference>
<dbReference type="PANTHER" id="PTHR46499:SF1">
    <property type="entry name" value="QUEUINE TRNA-RIBOSYLTRANSFERASE"/>
    <property type="match status" value="1"/>
</dbReference>
<dbReference type="Pfam" id="PF01702">
    <property type="entry name" value="TGT"/>
    <property type="match status" value="1"/>
</dbReference>
<dbReference type="SUPFAM" id="SSF51713">
    <property type="entry name" value="tRNA-guanine transglycosylase"/>
    <property type="match status" value="1"/>
</dbReference>
<accession>Q3ZAE2</accession>
<organism>
    <name type="scientific">Dehalococcoides mccartyi (strain ATCC BAA-2266 / KCTC 15142 / 195)</name>
    <name type="common">Dehalococcoides ethenogenes (strain 195)</name>
    <dbReference type="NCBI Taxonomy" id="243164"/>
    <lineage>
        <taxon>Bacteria</taxon>
        <taxon>Bacillati</taxon>
        <taxon>Chloroflexota</taxon>
        <taxon>Dehalococcoidia</taxon>
        <taxon>Dehalococcoidales</taxon>
        <taxon>Dehalococcoidaceae</taxon>
        <taxon>Dehalococcoides</taxon>
    </lineage>
</organism>
<sequence>MDKSFILNKTSPRSSARRGQLLTAHGQVETPVFCPVGSQATVKTLTPEDLKSVNVNMILSNTYHLYLRPGIPVVKEMGGLHKFMNWDGVILTDSGGYQIFSLANLRKLDEGGVSFRSHIDGSTRYITPEDAVSFQQDLGSDIAMVLDECPHSEASENEVLAAMERTHQWAKRCLAAHTLKSQHLFAIVQGGLSPVLRQQSAEYLASLDFPGYALGGLSLGEPKDITFETVRHTLRFLPENKPRYLMGVGAPEDLLEGVSCGVDIFDCVLPTRVARNGAFFSRLGRLNIRNASFATQKGPVDPECNCYTCRNYSAAYLHHLFRCEEILAYRLATIHNIAFLSNLMQEVRTSIEKDCFEEFKGDFLTRYQPTNESVRIEQKQKWLSARSGETSS</sequence>
<keyword id="KW-0328">Glycosyltransferase</keyword>
<keyword id="KW-0479">Metal-binding</keyword>
<keyword id="KW-0671">Queuosine biosynthesis</keyword>
<keyword id="KW-0808">Transferase</keyword>
<keyword id="KW-0819">tRNA processing</keyword>
<keyword id="KW-0862">Zinc</keyword>
<feature type="chain" id="PRO_1000058278" description="Queuine tRNA-ribosyltransferase">
    <location>
        <begin position="1"/>
        <end position="392"/>
    </location>
</feature>
<feature type="region of interest" description="RNA binding" evidence="1">
    <location>
        <begin position="247"/>
        <end position="253"/>
    </location>
</feature>
<feature type="region of interest" description="RNA binding; important for wobble base 34 recognition" evidence="1">
    <location>
        <begin position="271"/>
        <end position="275"/>
    </location>
</feature>
<feature type="active site" description="Proton acceptor" evidence="1">
    <location>
        <position position="93"/>
    </location>
</feature>
<feature type="active site" description="Nucleophile" evidence="1">
    <location>
        <position position="266"/>
    </location>
</feature>
<feature type="binding site" evidence="1">
    <location>
        <begin position="93"/>
        <end position="97"/>
    </location>
    <ligand>
        <name>substrate</name>
    </ligand>
</feature>
<feature type="binding site" evidence="1">
    <location>
        <position position="147"/>
    </location>
    <ligand>
        <name>substrate</name>
    </ligand>
</feature>
<feature type="binding site" evidence="1">
    <location>
        <position position="189"/>
    </location>
    <ligand>
        <name>substrate</name>
    </ligand>
</feature>
<feature type="binding site" evidence="1">
    <location>
        <position position="216"/>
    </location>
    <ligand>
        <name>substrate</name>
    </ligand>
</feature>
<feature type="binding site" evidence="1">
    <location>
        <position position="304"/>
    </location>
    <ligand>
        <name>Zn(2+)</name>
        <dbReference type="ChEBI" id="CHEBI:29105"/>
    </ligand>
</feature>
<feature type="binding site" evidence="1">
    <location>
        <position position="306"/>
    </location>
    <ligand>
        <name>Zn(2+)</name>
        <dbReference type="ChEBI" id="CHEBI:29105"/>
    </ligand>
</feature>
<feature type="binding site" evidence="1">
    <location>
        <position position="309"/>
    </location>
    <ligand>
        <name>Zn(2+)</name>
        <dbReference type="ChEBI" id="CHEBI:29105"/>
    </ligand>
</feature>
<feature type="binding site" evidence="1">
    <location>
        <position position="335"/>
    </location>
    <ligand>
        <name>Zn(2+)</name>
        <dbReference type="ChEBI" id="CHEBI:29105"/>
    </ligand>
</feature>
<gene>
    <name evidence="1" type="primary">tgt</name>
    <name type="ordered locus">DET0052</name>
</gene>
<reference key="1">
    <citation type="journal article" date="2005" name="Science">
        <title>Genome sequence of the PCE-dechlorinating bacterium Dehalococcoides ethenogenes.</title>
        <authorList>
            <person name="Seshadri R."/>
            <person name="Adrian L."/>
            <person name="Fouts D.E."/>
            <person name="Eisen J.A."/>
            <person name="Phillippy A.M."/>
            <person name="Methe B.A."/>
            <person name="Ward N.L."/>
            <person name="Nelson W.C."/>
            <person name="DeBoy R.T."/>
            <person name="Khouri H.M."/>
            <person name="Kolonay J.F."/>
            <person name="Dodson R.J."/>
            <person name="Daugherty S.C."/>
            <person name="Brinkac L.M."/>
            <person name="Sullivan S.A."/>
            <person name="Madupu R."/>
            <person name="Nelson K.E."/>
            <person name="Kang K.H."/>
            <person name="Impraim M."/>
            <person name="Tran K."/>
            <person name="Robinson J.M."/>
            <person name="Forberger H.A."/>
            <person name="Fraser C.M."/>
            <person name="Zinder S.H."/>
            <person name="Heidelberg J.F."/>
        </authorList>
    </citation>
    <scope>NUCLEOTIDE SEQUENCE [LARGE SCALE GENOMIC DNA]</scope>
    <source>
        <strain>ATCC BAA-2266 / KCTC 15142 / 195</strain>
    </source>
</reference>
<comment type="function">
    <text evidence="1">Catalyzes the base-exchange of a guanine (G) residue with the queuine precursor 7-aminomethyl-7-deazaguanine (PreQ1) at position 34 (anticodon wobble position) in tRNAs with GU(N) anticodons (tRNA-Asp, -Asn, -His and -Tyr). Catalysis occurs through a double-displacement mechanism. The nucleophile active site attacks the C1' of nucleotide 34 to detach the guanine base from the RNA, forming a covalent enzyme-RNA intermediate. The proton acceptor active site deprotonates the incoming PreQ1, allowing a nucleophilic attack on the C1' of the ribose to form the product. After dissociation, two additional enzymatic reactions on the tRNA convert PreQ1 to queuine (Q), resulting in the hypermodified nucleoside queuosine (7-(((4,5-cis-dihydroxy-2-cyclopenten-1-yl)amino)methyl)-7-deazaguanosine).</text>
</comment>
<comment type="catalytic activity">
    <reaction evidence="1">
        <text>7-aminomethyl-7-carbaguanine + guanosine(34) in tRNA = 7-aminomethyl-7-carbaguanosine(34) in tRNA + guanine</text>
        <dbReference type="Rhea" id="RHEA:24104"/>
        <dbReference type="Rhea" id="RHEA-COMP:10341"/>
        <dbReference type="Rhea" id="RHEA-COMP:10342"/>
        <dbReference type="ChEBI" id="CHEBI:16235"/>
        <dbReference type="ChEBI" id="CHEBI:58703"/>
        <dbReference type="ChEBI" id="CHEBI:74269"/>
        <dbReference type="ChEBI" id="CHEBI:82833"/>
        <dbReference type="EC" id="2.4.2.29"/>
    </reaction>
</comment>
<comment type="cofactor">
    <cofactor evidence="1">
        <name>Zn(2+)</name>
        <dbReference type="ChEBI" id="CHEBI:29105"/>
    </cofactor>
    <text evidence="1">Binds 1 zinc ion per subunit.</text>
</comment>
<comment type="pathway">
    <text evidence="1">tRNA modification; tRNA-queuosine biosynthesis.</text>
</comment>
<comment type="subunit">
    <text evidence="1">Homodimer. Within each dimer, one monomer is responsible for RNA recognition and catalysis, while the other monomer binds to the replacement base PreQ1.</text>
</comment>
<comment type="similarity">
    <text evidence="1">Belongs to the queuine tRNA-ribosyltransferase family.</text>
</comment>
<proteinExistence type="inferred from homology"/>
<protein>
    <recommendedName>
        <fullName evidence="1">Queuine tRNA-ribosyltransferase</fullName>
        <ecNumber evidence="1">2.4.2.29</ecNumber>
    </recommendedName>
    <alternativeName>
        <fullName evidence="1">Guanine insertion enzyme</fullName>
    </alternativeName>
    <alternativeName>
        <fullName evidence="1">tRNA-guanine transglycosylase</fullName>
    </alternativeName>
</protein>